<accession>P19607</accession>
<reference key="1">
    <citation type="journal article" date="1988" name="J. Biol. Chem.">
        <title>Multiple genes provide the basis for antifreeze protein diversity and dosage in the ocean pout, Macrozoarces americanus.</title>
        <authorList>
            <person name="Hew C.-L."/>
            <person name="Wang N.-C."/>
            <person name="Joshi S."/>
            <person name="Fletcher G.L."/>
            <person name="Scott G.K."/>
            <person name="Hayes P.H."/>
            <person name="Buettner B."/>
            <person name="Davies P.L."/>
        </authorList>
    </citation>
    <scope>NUCLEOTIDE SEQUENCE [GENOMIC DNA]</scope>
</reference>
<protein>
    <recommendedName>
        <fullName>Ice-structuring protein lambda OP-5</fullName>
        <shortName>ISP lambda OP-5</shortName>
    </recommendedName>
    <alternativeName>
        <fullName>Antifreeze protein lambda OP-5</fullName>
    </alternativeName>
</protein>
<proteinExistence type="inferred from homology"/>
<dbReference type="EMBL" id="J03924">
    <property type="protein sequence ID" value="AAA49346.1"/>
    <property type="molecule type" value="Genomic_DNA"/>
</dbReference>
<dbReference type="PIR" id="C31075">
    <property type="entry name" value="C31075"/>
</dbReference>
<dbReference type="SMR" id="P19607"/>
<dbReference type="GO" id="GO:0005576">
    <property type="term" value="C:extracellular region"/>
    <property type="evidence" value="ECO:0007669"/>
    <property type="project" value="UniProtKB-SubCell"/>
</dbReference>
<dbReference type="CDD" id="cd11617">
    <property type="entry name" value="Antifreeze_III"/>
    <property type="match status" value="1"/>
</dbReference>
<dbReference type="Gene3D" id="3.90.1210.10">
    <property type="entry name" value="Antifreeze-like/N-acetylneuraminic acid synthase C-terminal domain"/>
    <property type="match status" value="1"/>
</dbReference>
<dbReference type="InterPro" id="IPR006190">
    <property type="entry name" value="AFP_Neu5c_C"/>
</dbReference>
<dbReference type="InterPro" id="IPR036732">
    <property type="entry name" value="AFP_Neu5c_C_sf"/>
</dbReference>
<dbReference type="InterPro" id="IPR006013">
    <property type="entry name" value="Antifreeze_III"/>
</dbReference>
<dbReference type="InterPro" id="IPR013974">
    <property type="entry name" value="SAF"/>
</dbReference>
<dbReference type="Pfam" id="PF08666">
    <property type="entry name" value="SAF"/>
    <property type="match status" value="1"/>
</dbReference>
<dbReference type="PRINTS" id="PR00357">
    <property type="entry name" value="ANTIFREEZIII"/>
</dbReference>
<dbReference type="SMART" id="SM00858">
    <property type="entry name" value="SAF"/>
    <property type="match status" value="1"/>
</dbReference>
<dbReference type="SUPFAM" id="SSF51269">
    <property type="entry name" value="AFP III-like domain"/>
    <property type="match status" value="1"/>
</dbReference>
<dbReference type="PROSITE" id="PS50844">
    <property type="entry name" value="AFP_LIKE"/>
    <property type="match status" value="1"/>
</dbReference>
<feature type="signal peptide" evidence="1">
    <location>
        <begin position="1"/>
        <end position="21"/>
    </location>
</feature>
<feature type="chain" id="PRO_0000001695" description="Ice-structuring protein lambda OP-5">
    <location>
        <begin position="22"/>
        <end position="87"/>
    </location>
</feature>
<feature type="domain" description="AFP-like" evidence="2">
    <location>
        <begin position="24"/>
        <end position="83"/>
    </location>
</feature>
<feature type="site" description="Important for ice-binding" evidence="1">
    <location>
        <position position="29"/>
    </location>
</feature>
<feature type="site" description="Important for ice-binding" evidence="1">
    <location>
        <position position="34"/>
    </location>
</feature>
<feature type="site" description="Important for ice-binding" evidence="1">
    <location>
        <position position="38"/>
    </location>
</feature>
<feature type="site" description="Important for ice-binding" evidence="1">
    <location>
        <position position="64"/>
    </location>
</feature>
<name>ANP5_ZOAAM</name>
<evidence type="ECO:0000250" key="1"/>
<evidence type="ECO:0000255" key="2">
    <source>
        <dbReference type="PROSITE-ProRule" id="PRU00021"/>
    </source>
</evidence>
<evidence type="ECO:0000305" key="3"/>
<comment type="function">
    <text evidence="1">Contributes to protect fish blood from freezing at subzero sea water temperatures. Lowers the blood freezing point. Binds to nascent ice crystals and prevents further growth (By similarity).</text>
</comment>
<comment type="subcellular location">
    <subcellularLocation>
        <location evidence="1">Secreted</location>
    </subcellularLocation>
</comment>
<comment type="similarity">
    <text evidence="3">Belongs to the type-III AFP family.</text>
</comment>
<sequence length="87" mass="9229">MKSVILTGLLFVLLCVDHMTASQSVVATQLIPINTALTPVMMEGKVTNPIGIPFAEMSQIVGKQVNTPVAKGQTLMPNMVKTYAAGK</sequence>
<organism>
    <name type="scientific">Zoarces americanus</name>
    <name type="common">Ocean pout</name>
    <name type="synonym">Macrozoarces americanus</name>
    <dbReference type="NCBI Taxonomy" id="8199"/>
    <lineage>
        <taxon>Eukaryota</taxon>
        <taxon>Metazoa</taxon>
        <taxon>Chordata</taxon>
        <taxon>Craniata</taxon>
        <taxon>Vertebrata</taxon>
        <taxon>Euteleostomi</taxon>
        <taxon>Actinopterygii</taxon>
        <taxon>Neopterygii</taxon>
        <taxon>Teleostei</taxon>
        <taxon>Neoteleostei</taxon>
        <taxon>Acanthomorphata</taxon>
        <taxon>Eupercaria</taxon>
        <taxon>Perciformes</taxon>
        <taxon>Cottioidei</taxon>
        <taxon>Zoarcales</taxon>
        <taxon>Zoarcidae</taxon>
        <taxon>Zoarcinae</taxon>
        <taxon>Zoarces</taxon>
    </lineage>
</organism>
<keyword id="KW-0047">Antifreeze protein</keyword>
<keyword id="KW-0964">Secreted</keyword>
<keyword id="KW-0732">Signal</keyword>